<protein>
    <recommendedName>
        <fullName evidence="2">CST complex subunit STN1</fullName>
    </recommendedName>
    <alternativeName>
        <fullName>Oligonucleotide/oligosaccharide-binding fold-containing protein 1</fullName>
    </alternativeName>
    <alternativeName>
        <fullName>Suppressor of cdc thirteen homolog</fullName>
    </alternativeName>
</protein>
<accession>Q4R804</accession>
<sequence length="368" mass="42196">MQPGSSRCEEETPSLLWGLDPVFLAFAKLYIRDILDMKESRQVPGVFLYNGHPIKQVDVLGTVVGVRERDAFYSYGVDDSTGVINCICWKKLNTESVSAAPSAARELSLTSQLKKLQETIERRTKIEIGDTIRVRGSIRTYREEREIHATAYYKVDDPVWNIQIARMLELPTIYRKIYDQPFRSSALEKEEALSNPGALDLPSLTSLLSEKAKEFLMENRVQSFYQQELEMVESLLCLANQPVIHSACSDQVNFKKDTTSKAIHSIFKNAIQLLREKGLVFQKDDGFDNLYYVTREDKDLHRKIHQIIQQDCQKPNHMEKGCHFLHILACARLSIRPGLSEAVLQQVLELLEDQSDIVSTMEHYYTAF</sequence>
<comment type="function">
    <text evidence="2">Component of the CST complex proposed to act as a specialized replication factor promoting DNA replication under conditions of replication stress or natural replication barriers such as the telomere duplex. The CST complex binds single-stranded DNA with high affinity in a sequence-independent manner, while isolated subunits bind DNA with low affinity by themselves. Initially the CST complex has been proposed to protect telomeres from DNA degradation. However, the CST complex has been shown to be involved in several aspects of telomere replication. The CST complex inhibits telomerase and is involved in telomere length homeostasis; it is proposed to bind to newly telomerase-synthesized 3' overhangs and to terminate telomerase action implicating the association with the ACD:POT1 complex thus interfering with its telomerase stimulation activity. The CST complex is also proposed to be involved in fill-in synthesis of the telomeric C-strand probably implicating recruitment and activation of DNA polymerase alpha. The CST complex facilitates recovery from many forms of exogenous DNA damage; seems to be involved in the re-initiation of DNA replication at repaired forks and/or dormant origins. Required for efficicient replication of the duplex region of the telomere. Promotes efficient replication of lagging-strand telomeres. Promotes general replication start following replication-fork stalling implicating new origin firing. May be in involved in C-strand fill-in during late S/G2 phase independent of its role in telomere duplex replication (By similarity).</text>
</comment>
<comment type="subunit">
    <text evidence="2">Component of the CST complex, composed of TEN1/C17orf106, CTC1/C17orf68 and STN1; in the complex interacts directly with TEN1 and CTC1. Interacts with ACD/TPP1, POT1 and POLA1.</text>
</comment>
<comment type="subcellular location">
    <subcellularLocation>
        <location evidence="2">Nucleus</location>
    </subcellularLocation>
    <subcellularLocation>
        <location evidence="2">Chromosome</location>
        <location evidence="2">Telomere</location>
    </subcellularLocation>
</comment>
<comment type="similarity">
    <text evidence="3">Belongs to the STN1 family.</text>
</comment>
<keyword id="KW-0158">Chromosome</keyword>
<keyword id="KW-0238">DNA-binding</keyword>
<keyword id="KW-0539">Nucleus</keyword>
<keyword id="KW-1185">Reference proteome</keyword>
<keyword id="KW-0779">Telomere</keyword>
<proteinExistence type="evidence at transcript level"/>
<feature type="chain" id="PRO_0000392988" description="CST complex subunit STN1">
    <location>
        <begin position="1"/>
        <end position="368"/>
    </location>
</feature>
<feature type="DNA-binding region" description="OB">
    <location>
        <begin position="57"/>
        <end position="155"/>
    </location>
</feature>
<feature type="region of interest" description="Interaction with CTC1" evidence="2">
    <location>
        <begin position="1"/>
        <end position="185"/>
    </location>
</feature>
<feature type="region of interest" description="Winged helix-turn-helix (wHTH) 1" evidence="1">
    <location>
        <begin position="191"/>
        <end position="295"/>
    </location>
</feature>
<feature type="region of interest" description="Winged helix-turn-helix (wHTH) 2" evidence="1">
    <location>
        <begin position="296"/>
        <end position="368"/>
    </location>
</feature>
<evidence type="ECO:0000250" key="1"/>
<evidence type="ECO:0000250" key="2">
    <source>
        <dbReference type="UniProtKB" id="Q9H668"/>
    </source>
</evidence>
<evidence type="ECO:0000305" key="3"/>
<name>STN1_MACFA</name>
<dbReference type="EMBL" id="AB168657">
    <property type="protein sequence ID" value="BAE00768.1"/>
    <property type="molecule type" value="mRNA"/>
</dbReference>
<dbReference type="RefSeq" id="NP_001271808.1">
    <property type="nucleotide sequence ID" value="NM_001284879.1"/>
</dbReference>
<dbReference type="RefSeq" id="XP_005566418.1">
    <property type="nucleotide sequence ID" value="XM_005566361.2"/>
</dbReference>
<dbReference type="RefSeq" id="XP_015311352.1">
    <property type="nucleotide sequence ID" value="XM_015455866.1"/>
</dbReference>
<dbReference type="SMR" id="Q4R804"/>
<dbReference type="STRING" id="9541.ENSMFAP00000029079"/>
<dbReference type="GeneID" id="101866940"/>
<dbReference type="CTD" id="79991"/>
<dbReference type="VEuPathDB" id="HostDB:ENSMFAG00000041817"/>
<dbReference type="eggNOG" id="KOG3108">
    <property type="taxonomic scope" value="Eukaryota"/>
</dbReference>
<dbReference type="OMA" id="LCWKDEK"/>
<dbReference type="Proteomes" id="UP000233100">
    <property type="component" value="Chromosome 9"/>
</dbReference>
<dbReference type="GO" id="GO:0000781">
    <property type="term" value="C:chromosome, telomeric region"/>
    <property type="evidence" value="ECO:0000250"/>
    <property type="project" value="UniProtKB"/>
</dbReference>
<dbReference type="GO" id="GO:1990879">
    <property type="term" value="C:CST complex"/>
    <property type="evidence" value="ECO:0007669"/>
    <property type="project" value="InterPro"/>
</dbReference>
<dbReference type="GO" id="GO:0005634">
    <property type="term" value="C:nucleus"/>
    <property type="evidence" value="ECO:0000250"/>
    <property type="project" value="UniProtKB"/>
</dbReference>
<dbReference type="GO" id="GO:0043047">
    <property type="term" value="F:single-stranded telomeric DNA binding"/>
    <property type="evidence" value="ECO:0000250"/>
    <property type="project" value="UniProtKB"/>
</dbReference>
<dbReference type="GO" id="GO:0016233">
    <property type="term" value="P:telomere capping"/>
    <property type="evidence" value="ECO:0007669"/>
    <property type="project" value="InterPro"/>
</dbReference>
<dbReference type="GO" id="GO:0000723">
    <property type="term" value="P:telomere maintenance"/>
    <property type="evidence" value="ECO:0000250"/>
    <property type="project" value="UniProtKB"/>
</dbReference>
<dbReference type="GO" id="GO:0010833">
    <property type="term" value="P:telomere maintenance via telomere lengthening"/>
    <property type="evidence" value="ECO:0000250"/>
    <property type="project" value="UniProtKB"/>
</dbReference>
<dbReference type="CDD" id="cd04483">
    <property type="entry name" value="hOBFC1_like"/>
    <property type="match status" value="1"/>
</dbReference>
<dbReference type="FunFam" id="1.10.10.10:FF:000275">
    <property type="entry name" value="CST complex subunit STN1"/>
    <property type="match status" value="1"/>
</dbReference>
<dbReference type="FunFam" id="1.10.10.980:FF:000001">
    <property type="entry name" value="CST complex subunit STN1"/>
    <property type="match status" value="1"/>
</dbReference>
<dbReference type="FunFam" id="2.40.50.140:FF:000181">
    <property type="entry name" value="CST complex subunit STN1"/>
    <property type="match status" value="1"/>
</dbReference>
<dbReference type="Gene3D" id="1.10.10.980">
    <property type="entry name" value="CST, Suppressor of Cdc13 homolog, complex subunit STN1, N-terminal domain"/>
    <property type="match status" value="1"/>
</dbReference>
<dbReference type="Gene3D" id="2.40.50.140">
    <property type="entry name" value="Nucleic acid-binding proteins"/>
    <property type="match status" value="1"/>
</dbReference>
<dbReference type="Gene3D" id="1.10.10.10">
    <property type="entry name" value="Winged helix-like DNA-binding domain superfamily/Winged helix DNA-binding domain"/>
    <property type="match status" value="1"/>
</dbReference>
<dbReference type="InterPro" id="IPR015253">
    <property type="entry name" value="CST_STN1_C"/>
</dbReference>
<dbReference type="InterPro" id="IPR042082">
    <property type="entry name" value="CST_Stn1_wHTH1_sf"/>
</dbReference>
<dbReference type="InterPro" id="IPR012340">
    <property type="entry name" value="NA-bd_OB-fold"/>
</dbReference>
<dbReference type="InterPro" id="IPR040260">
    <property type="entry name" value="RFA2-like"/>
</dbReference>
<dbReference type="InterPro" id="IPR014647">
    <property type="entry name" value="Stn1"/>
</dbReference>
<dbReference type="InterPro" id="IPR018856">
    <property type="entry name" value="Stn1_N"/>
</dbReference>
<dbReference type="InterPro" id="IPR036388">
    <property type="entry name" value="WH-like_DNA-bd_sf"/>
</dbReference>
<dbReference type="InterPro" id="IPR036390">
    <property type="entry name" value="WH_DNA-bd_sf"/>
</dbReference>
<dbReference type="PANTHER" id="PTHR13989:SF33">
    <property type="entry name" value="CST COMPLEX SUBUNIT STN1"/>
    <property type="match status" value="1"/>
</dbReference>
<dbReference type="PANTHER" id="PTHR13989">
    <property type="entry name" value="REPLICATION PROTEIN A-RELATED"/>
    <property type="match status" value="1"/>
</dbReference>
<dbReference type="Pfam" id="PF10451">
    <property type="entry name" value="Stn1"/>
    <property type="match status" value="1"/>
</dbReference>
<dbReference type="Pfam" id="PF09170">
    <property type="entry name" value="STN1_2"/>
    <property type="match status" value="1"/>
</dbReference>
<dbReference type="PIRSF" id="PIRSF036950">
    <property type="entry name" value="UCP036950"/>
    <property type="match status" value="1"/>
</dbReference>
<dbReference type="SUPFAM" id="SSF50249">
    <property type="entry name" value="Nucleic acid-binding proteins"/>
    <property type="match status" value="1"/>
</dbReference>
<dbReference type="SUPFAM" id="SSF46785">
    <property type="entry name" value="Winged helix' DNA-binding domain"/>
    <property type="match status" value="1"/>
</dbReference>
<gene>
    <name evidence="2" type="primary">STN1</name>
    <name type="synonym">OBFC1</name>
    <name type="ORF">QtsA-13887</name>
</gene>
<reference key="1">
    <citation type="submission" date="2005-06" db="EMBL/GenBank/DDBJ databases">
        <title>DNA sequences of macaque genes expressed in brain or testis and its evolutionary implications.</title>
        <authorList>
            <consortium name="International consortium for macaque cDNA sequencing and analysis"/>
        </authorList>
    </citation>
    <scope>NUCLEOTIDE SEQUENCE [LARGE SCALE MRNA]</scope>
    <source>
        <tissue>Testis</tissue>
    </source>
</reference>
<organism>
    <name type="scientific">Macaca fascicularis</name>
    <name type="common">Crab-eating macaque</name>
    <name type="synonym">Cynomolgus monkey</name>
    <dbReference type="NCBI Taxonomy" id="9541"/>
    <lineage>
        <taxon>Eukaryota</taxon>
        <taxon>Metazoa</taxon>
        <taxon>Chordata</taxon>
        <taxon>Craniata</taxon>
        <taxon>Vertebrata</taxon>
        <taxon>Euteleostomi</taxon>
        <taxon>Mammalia</taxon>
        <taxon>Eutheria</taxon>
        <taxon>Euarchontoglires</taxon>
        <taxon>Primates</taxon>
        <taxon>Haplorrhini</taxon>
        <taxon>Catarrhini</taxon>
        <taxon>Cercopithecidae</taxon>
        <taxon>Cercopithecinae</taxon>
        <taxon>Macaca</taxon>
    </lineage>
</organism>